<reference key="1">
    <citation type="journal article" date="1991" name="J. Bacteriol.">
        <title>Analysis of virC, an operon involved in the secretion of Yop proteins by Yersinia enterocolitica.</title>
        <authorList>
            <person name="Michiels T."/>
            <person name="Vanooteghem J.-C."/>
            <person name="de Rouvroit C."/>
            <person name="China B."/>
            <person name="Gustin A."/>
            <person name="Boudry P."/>
            <person name="Cornelis G.R."/>
        </authorList>
    </citation>
    <scope>NUCLEOTIDE SEQUENCE [GENOMIC DNA]</scope>
    <source>
        <strain>439-80 / Serotype O:9</strain>
        <plasmid>pYV</plasmid>
    </source>
</reference>
<reference key="2">
    <citation type="submission" date="1998-10" db="EMBL/GenBank/DDBJ databases">
        <title>Detailed genetic map of the pYVe227 plasmid of Yersinia enterocolitica serotype O:9.</title>
        <authorList>
            <person name="Iriarte M."/>
            <person name="Lambermont I."/>
            <person name="Kerbourch C."/>
            <person name="Cornelis G.R."/>
        </authorList>
    </citation>
    <scope>NUCLEOTIDE SEQUENCE [GENOMIC DNA]</scope>
    <source>
        <strain>W22703 / Serotype O:9 / Biotype 2</strain>
        <plasmid>pYVe227</plasmid>
    </source>
</reference>
<reference key="3">
    <citation type="journal article" date="2003" name="Res. Microbiol.">
        <title>DNA sequence and analysis of the pYVa127/90 virulence plasmid of Yersinia enterocolitica strain A127/90.</title>
        <authorList>
            <person name="Foultier B."/>
            <person name="Cornelis G.R."/>
        </authorList>
    </citation>
    <scope>NUCLEOTIDE SEQUENCE [GENOMIC DNA]</scope>
    <source>
        <strain>A127/90 / Serotype O:8 / Biotype 1B</strain>
        <plasmid>pYVa127/90</plasmid>
    </source>
</reference>
<organism>
    <name type="scientific">Yersinia enterocolitica</name>
    <dbReference type="NCBI Taxonomy" id="630"/>
    <lineage>
        <taxon>Bacteria</taxon>
        <taxon>Pseudomonadati</taxon>
        <taxon>Pseudomonadota</taxon>
        <taxon>Gammaproteobacteria</taxon>
        <taxon>Enterobacterales</taxon>
        <taxon>Yersiniaceae</taxon>
        <taxon>Yersinia</taxon>
    </lineage>
</organism>
<gene>
    <name type="primary">yscA</name>
</gene>
<keyword id="KW-0614">Plasmid</keyword>
<keyword id="KW-0843">Virulence</keyword>
<geneLocation type="plasmid">
    <name>pYV</name>
</geneLocation>
<geneLocation type="plasmid">
    <name>pYVe227</name>
</geneLocation>
<geneLocation type="plasmid">
    <name>pYVa127/90</name>
</geneLocation>
<sequence length="32" mass="3815">MSQITTKHITVLFRRWMAIICCLIIKIAYLAY</sequence>
<proteinExistence type="evidence at transcript level"/>
<accession>P0C2M7</accession>
<accession>Q01242</accession>
<dbReference type="EMBL" id="M74011">
    <property type="protein sequence ID" value="AAC37018.1"/>
    <property type="molecule type" value="Genomic_DNA"/>
</dbReference>
<dbReference type="EMBL" id="AF102990">
    <property type="protein sequence ID" value="AAD16834.1"/>
    <property type="molecule type" value="Genomic_DNA"/>
</dbReference>
<dbReference type="EMBL" id="AY150843">
    <property type="protein sequence ID" value="AAN37513.1"/>
    <property type="molecule type" value="Genomic_DNA"/>
</dbReference>
<dbReference type="PIR" id="A40361">
    <property type="entry name" value="A40361"/>
</dbReference>
<dbReference type="RefSeq" id="NP_052411.1">
    <property type="nucleotide sequence ID" value="NC_002120.1"/>
</dbReference>
<dbReference type="RefSeq" id="NP_783685.1">
    <property type="nucleotide sequence ID" value="NC_004564.1"/>
</dbReference>
<dbReference type="RefSeq" id="NP_863533.1">
    <property type="nucleotide sequence ID" value="NC_005017.1"/>
</dbReference>
<dbReference type="RefSeq" id="WP_010891223.1">
    <property type="nucleotide sequence ID" value="NZ_NWMR01000033.1"/>
</dbReference>
<dbReference type="GeneID" id="31412288"/>
<dbReference type="InterPro" id="IPR035181">
    <property type="entry name" value="DUF5463"/>
</dbReference>
<dbReference type="Pfam" id="PF17551">
    <property type="entry name" value="DUF5463"/>
    <property type="match status" value="1"/>
</dbReference>
<comment type="induction">
    <text>At 37 degrees Celsius in the absence of calcium.</text>
</comment>
<comment type="miscellaneous">
    <text>Belongs to an operon involved in the translocation of Yop proteins across the bacterial membranes or in the specific control of this function.</text>
</comment>
<feature type="chain" id="PRO_0000066475" description="Yop proteins translocation protein A">
    <location>
        <begin position="1"/>
        <end position="32"/>
    </location>
</feature>
<protein>
    <recommendedName>
        <fullName>Yop proteins translocation protein A</fullName>
    </recommendedName>
</protein>
<name>YSCA_YEREN</name>